<feature type="initiator methionine" description="Removed" evidence="2">
    <location>
        <position position="1"/>
    </location>
</feature>
<feature type="chain" id="PRO_0000394803" description="GPN-loop GTPase 2">
    <location>
        <begin position="2"/>
        <end position="310"/>
    </location>
</feature>
<feature type="short sequence motif" description="Gly-Pro-Asn (GPN)-loop; involved in dimer interface" evidence="3">
    <location>
        <begin position="76"/>
        <end position="78"/>
    </location>
</feature>
<feature type="binding site" evidence="3">
    <location>
        <begin position="19"/>
        <end position="24"/>
    </location>
    <ligand>
        <name>GTP</name>
        <dbReference type="ChEBI" id="CHEBI:37565"/>
    </ligand>
</feature>
<feature type="binding site" evidence="3">
    <location>
        <begin position="178"/>
        <end position="181"/>
    </location>
    <ligand>
        <name>GTP</name>
        <dbReference type="ChEBI" id="CHEBI:37565"/>
    </ligand>
</feature>
<feature type="site" description="Stabilizes the phosphate intermediate; shared with dimeric partner" evidence="3">
    <location>
        <position position="78"/>
    </location>
</feature>
<feature type="modified residue" description="N-acetylalanine" evidence="2">
    <location>
        <position position="2"/>
    </location>
</feature>
<organism>
    <name type="scientific">Bos taurus</name>
    <name type="common">Bovine</name>
    <dbReference type="NCBI Taxonomy" id="9913"/>
    <lineage>
        <taxon>Eukaryota</taxon>
        <taxon>Metazoa</taxon>
        <taxon>Chordata</taxon>
        <taxon>Craniata</taxon>
        <taxon>Vertebrata</taxon>
        <taxon>Euteleostomi</taxon>
        <taxon>Mammalia</taxon>
        <taxon>Eutheria</taxon>
        <taxon>Laurasiatheria</taxon>
        <taxon>Artiodactyla</taxon>
        <taxon>Ruminantia</taxon>
        <taxon>Pecora</taxon>
        <taxon>Bovidae</taxon>
        <taxon>Bovinae</taxon>
        <taxon>Bos</taxon>
    </lineage>
</organism>
<comment type="function">
    <text evidence="1">Small GTPase required for proper localization of RNA polymerase II and III (RNAPII and RNAPIII). May act at an RNAP assembly step prior to nuclear import.</text>
</comment>
<comment type="subunit">
    <text evidence="1">Heterodimers with GPN1 or GPN3. Binds to RNA polymerase II (RNAPII).</text>
</comment>
<comment type="similarity">
    <text evidence="4">Belongs to the GPN-loop GTPase family.</text>
</comment>
<accession>A6H7F2</accession>
<keyword id="KW-0007">Acetylation</keyword>
<keyword id="KW-0342">GTP-binding</keyword>
<keyword id="KW-0378">Hydrolase</keyword>
<keyword id="KW-0547">Nucleotide-binding</keyword>
<keyword id="KW-1185">Reference proteome</keyword>
<name>GPN2_BOVIN</name>
<reference key="1">
    <citation type="submission" date="2007-06" db="EMBL/GenBank/DDBJ databases">
        <authorList>
            <consortium name="NIH - Mammalian Gene Collection (MGC) project"/>
        </authorList>
    </citation>
    <scope>NUCLEOTIDE SEQUENCE [LARGE SCALE MRNA]</scope>
</reference>
<evidence type="ECO:0000250" key="1">
    <source>
        <dbReference type="UniProtKB" id="Q08726"/>
    </source>
</evidence>
<evidence type="ECO:0000250" key="2">
    <source>
        <dbReference type="UniProtKB" id="Q9H9Y4"/>
    </source>
</evidence>
<evidence type="ECO:0000250" key="3">
    <source>
        <dbReference type="UniProtKB" id="Q9UYR9"/>
    </source>
</evidence>
<evidence type="ECO:0000305" key="4"/>
<proteinExistence type="evidence at transcript level"/>
<dbReference type="EMBL" id="BC146222">
    <property type="protein sequence ID" value="AAI46223.1"/>
    <property type="molecule type" value="mRNA"/>
</dbReference>
<dbReference type="RefSeq" id="NP_001092443.1">
    <property type="nucleotide sequence ID" value="NM_001098973.1"/>
</dbReference>
<dbReference type="SMR" id="A6H7F2"/>
<dbReference type="FunCoup" id="A6H7F2">
    <property type="interactions" value="3979"/>
</dbReference>
<dbReference type="STRING" id="9913.ENSBTAP00000019774"/>
<dbReference type="PaxDb" id="9913-ENSBTAP00000019774"/>
<dbReference type="Ensembl" id="ENSBTAT00000105833.1">
    <property type="protein sequence ID" value="ENSBTAP00000084591.1"/>
    <property type="gene ID" value="ENSBTAG00000055762.1"/>
</dbReference>
<dbReference type="GeneID" id="514772"/>
<dbReference type="KEGG" id="bta:514772"/>
<dbReference type="CTD" id="54707"/>
<dbReference type="VEuPathDB" id="HostDB:ENSBTAG00000014850"/>
<dbReference type="eggNOG" id="KOG1533">
    <property type="taxonomic scope" value="Eukaryota"/>
</dbReference>
<dbReference type="GeneTree" id="ENSGT00950000183172"/>
<dbReference type="HOGENOM" id="CLU_037460_0_2_1"/>
<dbReference type="InParanoid" id="A6H7F2"/>
<dbReference type="OMA" id="ATHNYFL"/>
<dbReference type="OrthoDB" id="5839at2759"/>
<dbReference type="TreeFam" id="TF300828"/>
<dbReference type="Proteomes" id="UP000009136">
    <property type="component" value="Chromosome 2"/>
</dbReference>
<dbReference type="Bgee" id="ENSBTAG00000014850">
    <property type="expression patterns" value="Expressed in oocyte and 104 other cell types or tissues"/>
</dbReference>
<dbReference type="GO" id="GO:0005525">
    <property type="term" value="F:GTP binding"/>
    <property type="evidence" value="ECO:0007669"/>
    <property type="project" value="UniProtKB-KW"/>
</dbReference>
<dbReference type="GO" id="GO:0003924">
    <property type="term" value="F:GTPase activity"/>
    <property type="evidence" value="ECO:0000318"/>
    <property type="project" value="GO_Central"/>
</dbReference>
<dbReference type="CDD" id="cd17871">
    <property type="entry name" value="GPN2"/>
    <property type="match status" value="1"/>
</dbReference>
<dbReference type="FunFam" id="3.40.50.300:FF:000338">
    <property type="entry name" value="GPN-loop GTPase 2"/>
    <property type="match status" value="1"/>
</dbReference>
<dbReference type="Gene3D" id="3.40.50.300">
    <property type="entry name" value="P-loop containing nucleotide triphosphate hydrolases"/>
    <property type="match status" value="1"/>
</dbReference>
<dbReference type="InterPro" id="IPR004130">
    <property type="entry name" value="Gpn"/>
</dbReference>
<dbReference type="InterPro" id="IPR030231">
    <property type="entry name" value="Gpn2"/>
</dbReference>
<dbReference type="InterPro" id="IPR027417">
    <property type="entry name" value="P-loop_NTPase"/>
</dbReference>
<dbReference type="PANTHER" id="PTHR21231:SF3">
    <property type="entry name" value="GPN-LOOP GTPASE 2"/>
    <property type="match status" value="1"/>
</dbReference>
<dbReference type="PANTHER" id="PTHR21231">
    <property type="entry name" value="XPA-BINDING PROTEIN 1-RELATED"/>
    <property type="match status" value="1"/>
</dbReference>
<dbReference type="Pfam" id="PF03029">
    <property type="entry name" value="ATP_bind_1"/>
    <property type="match status" value="1"/>
</dbReference>
<dbReference type="SUPFAM" id="SSF52540">
    <property type="entry name" value="P-loop containing nucleoside triphosphate hydrolases"/>
    <property type="match status" value="1"/>
</dbReference>
<gene>
    <name type="primary">GPN2</name>
    <name type="synonym">ATPBD1B</name>
</gene>
<protein>
    <recommendedName>
        <fullName>GPN-loop GTPase 2</fullName>
    </recommendedName>
    <alternativeName>
        <fullName>ATP-binding domain 1 family member B</fullName>
    </alternativeName>
</protein>
<sequence>MAGAAPTTAFGQAVIGPPGSGKTTYCLGMSEFLRALGRRVAVVNLDPANEGLPYECAVDVGELVGLGDVMDALQLGPNGGLLYCMEYLEANLDWLRAKLDPLRGHYFLFDCPGQVELCTHHGALRSIFSQMTQWDLRLTAVHLVDSHYCTDPAKFISVLCTSLATMLHVELPHVNLLSKMDLIEHYGKLAFNLDYYTEVLDLSYLLDHLASDPFFRHYRQLNEKLVQLIEDYSLVSFIPLNIQDKESIQQVLQAVDKANGYCFGVQEQRSLEAMMSAAMGADFHFSSTLGLQEKYLAPSEQSVEQEAMQL</sequence>